<dbReference type="EMBL" id="AF034077">
    <property type="protein sequence ID" value="AAC83412.1"/>
    <property type="molecule type" value="Genomic_DNA"/>
</dbReference>
<dbReference type="PIR" id="B61219">
    <property type="entry name" value="B61219"/>
</dbReference>
<dbReference type="RefSeq" id="NP_001108005.1">
    <property type="nucleotide sequence ID" value="NM_001114533.1"/>
</dbReference>
<dbReference type="SMR" id="P38029"/>
<dbReference type="FunCoup" id="P38029">
    <property type="interactions" value="158"/>
</dbReference>
<dbReference type="STRING" id="9796.ENSECAP00000053574"/>
<dbReference type="MEROPS" id="I04.001"/>
<dbReference type="PaxDb" id="9796-ENSECAP00000053574"/>
<dbReference type="GeneID" id="100065158"/>
<dbReference type="KEGG" id="ecb:100065158"/>
<dbReference type="CTD" id="103910445"/>
<dbReference type="InParanoid" id="P38029"/>
<dbReference type="OrthoDB" id="671595at2759"/>
<dbReference type="Proteomes" id="UP000002281">
    <property type="component" value="Unplaced"/>
</dbReference>
<dbReference type="GO" id="GO:0005615">
    <property type="term" value="C:extracellular space"/>
    <property type="evidence" value="ECO:0000318"/>
    <property type="project" value="GO_Central"/>
</dbReference>
<dbReference type="GO" id="GO:0004867">
    <property type="term" value="F:serine-type endopeptidase inhibitor activity"/>
    <property type="evidence" value="ECO:0000318"/>
    <property type="project" value="GO_Central"/>
</dbReference>
<dbReference type="GO" id="GO:0006953">
    <property type="term" value="P:acute-phase response"/>
    <property type="evidence" value="ECO:0007669"/>
    <property type="project" value="UniProtKB-KW"/>
</dbReference>
<dbReference type="CDD" id="cd02056">
    <property type="entry name" value="serpinA1_A1AT"/>
    <property type="match status" value="1"/>
</dbReference>
<dbReference type="FunFam" id="2.30.39.10:FF:000003">
    <property type="entry name" value="alpha-1-antitrypsin isoform X1"/>
    <property type="match status" value="1"/>
</dbReference>
<dbReference type="FunFam" id="3.30.497.10:FF:000001">
    <property type="entry name" value="Serine protease inhibitor"/>
    <property type="match status" value="1"/>
</dbReference>
<dbReference type="FunFam" id="2.10.310.10:FF:000001">
    <property type="entry name" value="Serpin family A member 1"/>
    <property type="match status" value="1"/>
</dbReference>
<dbReference type="Gene3D" id="2.30.39.10">
    <property type="entry name" value="Alpha-1-antitrypsin, domain 1"/>
    <property type="match status" value="1"/>
</dbReference>
<dbReference type="Gene3D" id="3.30.497.10">
    <property type="entry name" value="Antithrombin, subunit I, domain 2"/>
    <property type="match status" value="1"/>
</dbReference>
<dbReference type="Gene3D" id="2.10.310.10">
    <property type="entry name" value="Serpins superfamily"/>
    <property type="match status" value="1"/>
</dbReference>
<dbReference type="InterPro" id="IPR023795">
    <property type="entry name" value="Serpin_CS"/>
</dbReference>
<dbReference type="InterPro" id="IPR023796">
    <property type="entry name" value="Serpin_dom"/>
</dbReference>
<dbReference type="InterPro" id="IPR000215">
    <property type="entry name" value="Serpin_fam"/>
</dbReference>
<dbReference type="InterPro" id="IPR036186">
    <property type="entry name" value="Serpin_sf"/>
</dbReference>
<dbReference type="InterPro" id="IPR042178">
    <property type="entry name" value="Serpin_sf_1"/>
</dbReference>
<dbReference type="InterPro" id="IPR042185">
    <property type="entry name" value="Serpin_sf_2"/>
</dbReference>
<dbReference type="PANTHER" id="PTHR11461:SF165">
    <property type="entry name" value="ALPHA-1-ANTITRYPSIN"/>
    <property type="match status" value="1"/>
</dbReference>
<dbReference type="PANTHER" id="PTHR11461">
    <property type="entry name" value="SERINE PROTEASE INHIBITOR, SERPIN"/>
    <property type="match status" value="1"/>
</dbReference>
<dbReference type="Pfam" id="PF00079">
    <property type="entry name" value="Serpin"/>
    <property type="match status" value="1"/>
</dbReference>
<dbReference type="SMART" id="SM00093">
    <property type="entry name" value="SERPIN"/>
    <property type="match status" value="1"/>
</dbReference>
<dbReference type="SUPFAM" id="SSF56574">
    <property type="entry name" value="Serpins"/>
    <property type="match status" value="1"/>
</dbReference>
<dbReference type="PROSITE" id="PS00284">
    <property type="entry name" value="SERPIN"/>
    <property type="match status" value="1"/>
</dbReference>
<organism>
    <name type="scientific">Equus caballus</name>
    <name type="common">Horse</name>
    <dbReference type="NCBI Taxonomy" id="9796"/>
    <lineage>
        <taxon>Eukaryota</taxon>
        <taxon>Metazoa</taxon>
        <taxon>Chordata</taxon>
        <taxon>Craniata</taxon>
        <taxon>Vertebrata</taxon>
        <taxon>Euteleostomi</taxon>
        <taxon>Mammalia</taxon>
        <taxon>Eutheria</taxon>
        <taxon>Laurasiatheria</taxon>
        <taxon>Perissodactyla</taxon>
        <taxon>Equidae</taxon>
        <taxon>Equus</taxon>
    </lineage>
</organism>
<keyword id="KW-0011">Acute phase</keyword>
<keyword id="KW-0903">Direct protein sequencing</keyword>
<keyword id="KW-0325">Glycoprotein</keyword>
<keyword id="KW-0646">Protease inhibitor</keyword>
<keyword id="KW-1185">Reference proteome</keyword>
<keyword id="KW-0964">Secreted</keyword>
<keyword id="KW-0722">Serine protease inhibitor</keyword>
<keyword id="KW-0732">Signal</keyword>
<reference key="1">
    <citation type="submission" date="1999-08" db="EMBL/GenBank/DDBJ databases">
        <title>Equine alpha-1-antitrypsin gene.</title>
        <authorList>
            <person name="Giffard J.M."/>
            <person name="Irvin Z.V."/>
            <person name="Bell T.K."/>
            <person name="Brandon R.B."/>
        </authorList>
    </citation>
    <scope>NUCLEOTIDE SEQUENCE [GENOMIC DNA]</scope>
</reference>
<reference key="2">
    <citation type="journal article" date="1991" name="Biochem. Genet.">
        <title>The equine major plasma serpin multigene family: partial characterization including sequence of the reactive-site regions.</title>
        <authorList>
            <person name="Patterson S.D."/>
            <person name="Bell K."/>
            <person name="Shaw D.C."/>
        </authorList>
    </citation>
    <scope>PROTEIN SEQUENCE OF 25-43 AND 381-412</scope>
    <source>
        <tissue>Plasma</tissue>
    </source>
</reference>
<reference key="3">
    <citation type="journal article" date="1990" name="Biochem. Int.">
        <title>The carbohydrate side chains of the major plasma serpins of horse and wallaby: analyses of enzymatic and chemically treated (including 'Smith degradation') protein blots by lectin binding.</title>
        <authorList>
            <person name="Patterson S.D."/>
            <person name="Bell K."/>
        </authorList>
    </citation>
    <scope>STRUCTURE OF CARBOHYDRATES</scope>
</reference>
<name>A1AT2_HORSE</name>
<comment type="function">
    <text evidence="1">Inhibitor of serine proteases.</text>
</comment>
<comment type="subcellular location">
    <subcellularLocation>
        <location>Secreted</location>
    </subcellularLocation>
</comment>
<comment type="tissue specificity">
    <text>Plasma.</text>
</comment>
<comment type="domain">
    <text evidence="1">The reactive center loop (RCL) extends out from the body of the protein and directs binding to the target protease. The protease cleaves the serpin at the reactive site within the RCL, establishing a covalent linkage between the serpin reactive site and the active site of the protease. The resulting inactive serpin-protease complex is highly stable (By similarity).</text>
</comment>
<comment type="PTM">
    <text>N-glycosylated with carbohydrates having biantennary side chains.</text>
</comment>
<comment type="similarity">
    <text evidence="4">Belongs to the serpin family.</text>
</comment>
<sequence length="421" mass="46942">MPSSVPWCLLLLAGLCCLVPSSLAEDLQGCAVQETHATAHDEEHLQEPAEHKIAPNLADFAFSLYRHVAHQSNTTNIFFSPVSIATAFALLSLGAKGDTHTQILEGLSFNLTELAEAQIHDGFQHLLNALNHSDNQLQLTTGNGLFIDESAKLLDKFLEDVKKLYHSEAFSINFRDTEEAKKQINDYVEKGTQGKIVDLVKDLDKDTVLALVNYIFFKGTWEKPFEPEYTTEQDFHVDEKTTVRVPMMHRLSSFDVQYSDTLSSWVLLLDYAGNATAFFILPDQGKLQHLEDTLTKGILARFLGNRHSSFVNVHLPKLSISGTYDLTSILPELGITKVFSRQADLSGITEEVPLTVSKALHKAVLTIDEKGTEAAGTTMWEIMPISLPPDLKFNRPFVLIIYDRNTKSPLFVGKVVDPTQK</sequence>
<accession>P38029</accession>
<accession>O46519</accession>
<protein>
    <recommendedName>
        <fullName>Alpha-1-antiproteinase 2</fullName>
    </recommendedName>
    <alternativeName>
        <fullName>Alpha-1-antitrypsin 2</fullName>
    </alternativeName>
    <alternativeName>
        <fullName>Alpha-1-proteinase inhibitor 2</fullName>
    </alternativeName>
    <alternativeName>
        <fullName>SPI2</fullName>
    </alternativeName>
</protein>
<evidence type="ECO:0000250" key="1"/>
<evidence type="ECO:0000255" key="2"/>
<evidence type="ECO:0000269" key="3">
    <source>
    </source>
</evidence>
<evidence type="ECO:0000305" key="4"/>
<proteinExistence type="evidence at protein level"/>
<feature type="signal peptide" evidence="3">
    <location>
        <begin position="1"/>
        <end position="24"/>
    </location>
</feature>
<feature type="chain" id="PRO_0000032385" description="Alpha-1-antiproteinase 2">
    <location>
        <begin position="25"/>
        <end position="421"/>
    </location>
</feature>
<feature type="region of interest" description="RCL">
    <location>
        <begin position="376"/>
        <end position="395"/>
    </location>
</feature>
<feature type="site" description="Reactive bond" evidence="1">
    <location>
        <begin position="385"/>
        <end position="386"/>
    </location>
</feature>
<feature type="glycosylation site" description="N-linked (GlcNAc...) asparagine" evidence="2">
    <location>
        <position position="73"/>
    </location>
</feature>
<feature type="glycosylation site" description="N-linked (GlcNAc...) asparagine" evidence="2">
    <location>
        <position position="110"/>
    </location>
</feature>
<feature type="glycosylation site" description="N-linked (GlcNAc...) asparagine" evidence="2">
    <location>
        <position position="274"/>
    </location>
</feature>
<feature type="sequence conflict" description="In Ref. 2; AA sequence." evidence="4" ref="2">
    <original>HATAH</original>
    <variation>DADKD</variation>
    <location>
        <begin position="36"/>
        <end position="40"/>
    </location>
</feature>
<feature type="sequence conflict" description="In Ref. 2; AA sequence." evidence="4" ref="2">
    <original>V</original>
    <variation>I</variation>
    <location>
        <position position="398"/>
    </location>
</feature>